<evidence type="ECO:0000255" key="1">
    <source>
        <dbReference type="HAMAP-Rule" id="MF_01411"/>
    </source>
</evidence>
<proteinExistence type="inferred from homology"/>
<name>LPTD_AERS4</name>
<comment type="function">
    <text evidence="1">Together with LptE, is involved in the assembly of lipopolysaccharide (LPS) at the surface of the outer membrane.</text>
</comment>
<comment type="subunit">
    <text evidence="1">Component of the lipopolysaccharide transport and assembly complex. Interacts with LptE and LptA.</text>
</comment>
<comment type="subcellular location">
    <subcellularLocation>
        <location evidence="1">Cell outer membrane</location>
    </subcellularLocation>
</comment>
<comment type="similarity">
    <text evidence="1">Belongs to the LptD family.</text>
</comment>
<feature type="signal peptide" evidence="1">
    <location>
        <begin position="1"/>
        <end position="29"/>
    </location>
</feature>
<feature type="chain" id="PRO_1000068452" description="LPS-assembly protein LptD">
    <location>
        <begin position="30"/>
        <end position="810"/>
    </location>
</feature>
<reference key="1">
    <citation type="journal article" date="2008" name="BMC Genomics">
        <title>The genome of Aeromonas salmonicida subsp. salmonicida A449: insights into the evolution of a fish pathogen.</title>
        <authorList>
            <person name="Reith M.E."/>
            <person name="Singh R.K."/>
            <person name="Curtis B."/>
            <person name="Boyd J.M."/>
            <person name="Bouevitch A."/>
            <person name="Kimball J."/>
            <person name="Munholland J."/>
            <person name="Murphy C."/>
            <person name="Sarty D."/>
            <person name="Williams J."/>
            <person name="Nash J.H."/>
            <person name="Johnson S.C."/>
            <person name="Brown L.L."/>
        </authorList>
    </citation>
    <scope>NUCLEOTIDE SEQUENCE [LARGE SCALE GENOMIC DNA]</scope>
    <source>
        <strain>A449</strain>
    </source>
</reference>
<keyword id="KW-0998">Cell outer membrane</keyword>
<keyword id="KW-0472">Membrane</keyword>
<keyword id="KW-0732">Signal</keyword>
<organism>
    <name type="scientific">Aeromonas salmonicida (strain A449)</name>
    <dbReference type="NCBI Taxonomy" id="382245"/>
    <lineage>
        <taxon>Bacteria</taxon>
        <taxon>Pseudomonadati</taxon>
        <taxon>Pseudomonadota</taxon>
        <taxon>Gammaproteobacteria</taxon>
        <taxon>Aeromonadales</taxon>
        <taxon>Aeromonadaceae</taxon>
        <taxon>Aeromonas</taxon>
    </lineage>
</organism>
<protein>
    <recommendedName>
        <fullName evidence="1">LPS-assembly protein LptD</fullName>
    </recommendedName>
</protein>
<accession>A4SR03</accession>
<sequence length="810" mass="92195">MTKWTLGYSYPIALTISLIPALTPAIVQAAPLTPPPATGILDGLCYDYVPKVEKLAPGKDANAQPVEVDADRLEAKQGGTAVYQGDVKVRQGVRKFDSDYAELDQKSRDVIAIGNIYYNDGQITVTSDKTLKSNLDTKNSELEEGKYQVHGSPVRGSADRVTMTNNNQNITLEGAQYTTCPPGQEVWTLKAGSIDIDQTEVFGEAWNASLWLYDYPVFYFPYINFPIKDERKTGLLYPGYTQSSKNGMDITQPFYWNIAPNYDATITSRFMDRRGLMEQVEFRYMPDPAHVGSLYFENLADDKQYDETPSLNEKLSDGHRYLLNARHTSLFADNAMRVSVDYTKVRDRDYNYFNDFSPKVGTQVENQLQQSLMAGYFQQNWNLNTEVRTYQILLASAQQPHELMPRINHNYYHQGNWYDLAWNTEVTRFGYNNTQASAQNLGDAYTGTRVYTAPTLTMPLIDEAGYYLDSQYKLMYTRYDQEVPDNMSSTFTKRFTPEGASGVTLDEGIITRTLPSFRLKGGMTFERNQDWFGGDANQTLEPEFQYLYVPYKDQDNIGVYDSTTMRQDYYSLFSDRRYAGLDRISDSNRVSLGVTTRVYDQAGDERIRLAVAQAFDFVAPRVKLYPSESLATNTRSPLSFEGDAKINEQWFAHAGAQYDMDQSEISSANSALEYRREKLISQLNYRFVRNANYDLSNTNQVADLNQVGMLLTTPLNDQWHLYGGYYHDLDQGVKVDRKVGLKYDSCCWSINFNLEWVNTPDNVTMRPTSERSLGIQFEMKGLGSVGTGSKGTSLDTEALPYIRPFNLRDQ</sequence>
<gene>
    <name evidence="1" type="primary">lptD</name>
    <name type="synonym">imp</name>
    <name type="synonym">ostA</name>
    <name type="ordered locus">ASA_3347</name>
</gene>
<dbReference type="EMBL" id="CP000644">
    <property type="protein sequence ID" value="ABO91325.1"/>
    <property type="molecule type" value="Genomic_DNA"/>
</dbReference>
<dbReference type="RefSeq" id="WP_005311708.1">
    <property type="nucleotide sequence ID" value="NC_009348.1"/>
</dbReference>
<dbReference type="SMR" id="A4SR03"/>
<dbReference type="STRING" id="29491.GCA_000820065_03737"/>
<dbReference type="KEGG" id="asa:ASA_3347"/>
<dbReference type="eggNOG" id="COG1452">
    <property type="taxonomic scope" value="Bacteria"/>
</dbReference>
<dbReference type="HOGENOM" id="CLU_009039_2_0_6"/>
<dbReference type="Proteomes" id="UP000000225">
    <property type="component" value="Chromosome"/>
</dbReference>
<dbReference type="GO" id="GO:0009279">
    <property type="term" value="C:cell outer membrane"/>
    <property type="evidence" value="ECO:0007669"/>
    <property type="project" value="UniProtKB-SubCell"/>
</dbReference>
<dbReference type="GO" id="GO:1990351">
    <property type="term" value="C:transporter complex"/>
    <property type="evidence" value="ECO:0007669"/>
    <property type="project" value="TreeGrafter"/>
</dbReference>
<dbReference type="GO" id="GO:0043165">
    <property type="term" value="P:Gram-negative-bacterium-type cell outer membrane assembly"/>
    <property type="evidence" value="ECO:0007669"/>
    <property type="project" value="UniProtKB-UniRule"/>
</dbReference>
<dbReference type="GO" id="GO:0015920">
    <property type="term" value="P:lipopolysaccharide transport"/>
    <property type="evidence" value="ECO:0007669"/>
    <property type="project" value="InterPro"/>
</dbReference>
<dbReference type="Gene3D" id="2.60.450.10">
    <property type="entry name" value="Lipopolysaccharide (LPS) transport protein A like domain"/>
    <property type="match status" value="1"/>
</dbReference>
<dbReference type="HAMAP" id="MF_01411">
    <property type="entry name" value="LPS_assembly_LptD"/>
    <property type="match status" value="1"/>
</dbReference>
<dbReference type="InterPro" id="IPR020889">
    <property type="entry name" value="LipoPS_assembly_LptD"/>
</dbReference>
<dbReference type="InterPro" id="IPR050218">
    <property type="entry name" value="LptD"/>
</dbReference>
<dbReference type="InterPro" id="IPR007543">
    <property type="entry name" value="LptD_C"/>
</dbReference>
<dbReference type="InterPro" id="IPR005653">
    <property type="entry name" value="OstA-like_N"/>
</dbReference>
<dbReference type="PANTHER" id="PTHR30189">
    <property type="entry name" value="LPS-ASSEMBLY PROTEIN"/>
    <property type="match status" value="1"/>
</dbReference>
<dbReference type="PANTHER" id="PTHR30189:SF1">
    <property type="entry name" value="LPS-ASSEMBLY PROTEIN LPTD"/>
    <property type="match status" value="1"/>
</dbReference>
<dbReference type="Pfam" id="PF04453">
    <property type="entry name" value="LptD"/>
    <property type="match status" value="1"/>
</dbReference>
<dbReference type="Pfam" id="PF03968">
    <property type="entry name" value="LptD_N"/>
    <property type="match status" value="1"/>
</dbReference>